<name>PRND_HUMAN</name>
<reference key="1">
    <citation type="journal article" date="1999" name="J. Mol. Biol.">
        <title>Ataxia in prion protein (PrP)-deficient mice is associated with upregulation of the novel PrP-like protein doppel.</title>
        <authorList>
            <person name="Moore R.C."/>
            <person name="Lee I.Y."/>
            <person name="Silverman G.L."/>
            <person name="Harrison P.M."/>
            <person name="Strome R."/>
            <person name="Heinrich C."/>
            <person name="Karunaratne A."/>
            <person name="Pasternak S.H."/>
            <person name="Chishti M.A."/>
            <person name="Liang Y."/>
            <person name="Mastrangelo P."/>
            <person name="Wang K."/>
            <person name="Smit A.F.A."/>
            <person name="Katamine S."/>
            <person name="Carlson G.A."/>
            <person name="Cohen F.E."/>
            <person name="Prusiner S.B."/>
            <person name="Melton D.W."/>
            <person name="Tremblay P."/>
            <person name="Hood L.E."/>
            <person name="Westaway D."/>
        </authorList>
    </citation>
    <scope>NUCLEOTIDE SEQUENCE [GENOMIC DNA]</scope>
    <scope>VARIANT MET-174</scope>
</reference>
<reference key="2">
    <citation type="submission" date="1999-09" db="EMBL/GenBank/DDBJ databases">
        <title>Human mRNA sequence for a novel Prion-like gene, prnd.</title>
        <authorList>
            <person name="Lee I.Y."/>
            <person name="Wang K."/>
            <person name="Westaway D."/>
            <person name="Hood L.E."/>
        </authorList>
    </citation>
    <scope>NUCLEOTIDE SEQUENCE [MRNA]</scope>
    <scope>VARIANT MET-174</scope>
    <source>
        <tissue>Brain cortex</tissue>
        <tissue>Testis</tissue>
    </source>
</reference>
<reference key="3">
    <citation type="submission" date="2007-06" db="EMBL/GenBank/DDBJ databases">
        <authorList>
            <person name="Chen H.T."/>
        </authorList>
    </citation>
    <scope>NUCLEOTIDE SEQUENCE [GENOMIC DNA]</scope>
    <source>
        <tissue>Blood</tissue>
    </source>
</reference>
<reference key="4">
    <citation type="journal article" date="2003" name="Genome Res.">
        <title>The secreted protein discovery initiative (SPDI), a large-scale effort to identify novel human secreted and transmembrane proteins: a bioinformatics assessment.</title>
        <authorList>
            <person name="Clark H.F."/>
            <person name="Gurney A.L."/>
            <person name="Abaya E."/>
            <person name="Baker K."/>
            <person name="Baldwin D.T."/>
            <person name="Brush J."/>
            <person name="Chen J."/>
            <person name="Chow B."/>
            <person name="Chui C."/>
            <person name="Crowley C."/>
            <person name="Currell B."/>
            <person name="Deuel B."/>
            <person name="Dowd P."/>
            <person name="Eaton D."/>
            <person name="Foster J.S."/>
            <person name="Grimaldi C."/>
            <person name="Gu Q."/>
            <person name="Hass P.E."/>
            <person name="Heldens S."/>
            <person name="Huang A."/>
            <person name="Kim H.S."/>
            <person name="Klimowski L."/>
            <person name="Jin Y."/>
            <person name="Johnson S."/>
            <person name="Lee J."/>
            <person name="Lewis L."/>
            <person name="Liao D."/>
            <person name="Mark M.R."/>
            <person name="Robbie E."/>
            <person name="Sanchez C."/>
            <person name="Schoenfeld J."/>
            <person name="Seshagiri S."/>
            <person name="Simmons L."/>
            <person name="Singh J."/>
            <person name="Smith V."/>
            <person name="Stinson J."/>
            <person name="Vagts A."/>
            <person name="Vandlen R.L."/>
            <person name="Watanabe C."/>
            <person name="Wieand D."/>
            <person name="Woods K."/>
            <person name="Xie M.-H."/>
            <person name="Yansura D.G."/>
            <person name="Yi S."/>
            <person name="Yu G."/>
            <person name="Yuan J."/>
            <person name="Zhang M."/>
            <person name="Zhang Z."/>
            <person name="Goddard A.D."/>
            <person name="Wood W.I."/>
            <person name="Godowski P.J."/>
            <person name="Gray A.M."/>
        </authorList>
    </citation>
    <scope>NUCLEOTIDE SEQUENCE [LARGE SCALE MRNA]</scope>
    <scope>VARIANT MET-174</scope>
</reference>
<reference key="5">
    <citation type="journal article" date="2001" name="Nature">
        <title>The DNA sequence and comparative analysis of human chromosome 20.</title>
        <authorList>
            <person name="Deloukas P."/>
            <person name="Matthews L.H."/>
            <person name="Ashurst J.L."/>
            <person name="Burton J."/>
            <person name="Gilbert J.G.R."/>
            <person name="Jones M."/>
            <person name="Stavrides G."/>
            <person name="Almeida J.P."/>
            <person name="Babbage A.K."/>
            <person name="Bagguley C.L."/>
            <person name="Bailey J."/>
            <person name="Barlow K.F."/>
            <person name="Bates K.N."/>
            <person name="Beard L.M."/>
            <person name="Beare D.M."/>
            <person name="Beasley O.P."/>
            <person name="Bird C.P."/>
            <person name="Blakey S.E."/>
            <person name="Bridgeman A.M."/>
            <person name="Brown A.J."/>
            <person name="Buck D."/>
            <person name="Burrill W.D."/>
            <person name="Butler A.P."/>
            <person name="Carder C."/>
            <person name="Carter N.P."/>
            <person name="Chapman J.C."/>
            <person name="Clamp M."/>
            <person name="Clark G."/>
            <person name="Clark L.N."/>
            <person name="Clark S.Y."/>
            <person name="Clee C.M."/>
            <person name="Clegg S."/>
            <person name="Cobley V.E."/>
            <person name="Collier R.E."/>
            <person name="Connor R.E."/>
            <person name="Corby N.R."/>
            <person name="Coulson A."/>
            <person name="Coville G.J."/>
            <person name="Deadman R."/>
            <person name="Dhami P.D."/>
            <person name="Dunn M."/>
            <person name="Ellington A.G."/>
            <person name="Frankland J.A."/>
            <person name="Fraser A."/>
            <person name="French L."/>
            <person name="Garner P."/>
            <person name="Grafham D.V."/>
            <person name="Griffiths C."/>
            <person name="Griffiths M.N.D."/>
            <person name="Gwilliam R."/>
            <person name="Hall R.E."/>
            <person name="Hammond S."/>
            <person name="Harley J.L."/>
            <person name="Heath P.D."/>
            <person name="Ho S."/>
            <person name="Holden J.L."/>
            <person name="Howden P.J."/>
            <person name="Huckle E."/>
            <person name="Hunt A.R."/>
            <person name="Hunt S.E."/>
            <person name="Jekosch K."/>
            <person name="Johnson C.M."/>
            <person name="Johnson D."/>
            <person name="Kay M.P."/>
            <person name="Kimberley A.M."/>
            <person name="King A."/>
            <person name="Knights A."/>
            <person name="Laird G.K."/>
            <person name="Lawlor S."/>
            <person name="Lehvaeslaiho M.H."/>
            <person name="Leversha M.A."/>
            <person name="Lloyd C."/>
            <person name="Lloyd D.M."/>
            <person name="Lovell J.D."/>
            <person name="Marsh V.L."/>
            <person name="Martin S.L."/>
            <person name="McConnachie L.J."/>
            <person name="McLay K."/>
            <person name="McMurray A.A."/>
            <person name="Milne S.A."/>
            <person name="Mistry D."/>
            <person name="Moore M.J.F."/>
            <person name="Mullikin J.C."/>
            <person name="Nickerson T."/>
            <person name="Oliver K."/>
            <person name="Parker A."/>
            <person name="Patel R."/>
            <person name="Pearce T.A.V."/>
            <person name="Peck A.I."/>
            <person name="Phillimore B.J.C.T."/>
            <person name="Prathalingam S.R."/>
            <person name="Plumb R.W."/>
            <person name="Ramsay H."/>
            <person name="Rice C.M."/>
            <person name="Ross M.T."/>
            <person name="Scott C.E."/>
            <person name="Sehra H.K."/>
            <person name="Shownkeen R."/>
            <person name="Sims S."/>
            <person name="Skuce C.D."/>
            <person name="Smith M.L."/>
            <person name="Soderlund C."/>
            <person name="Steward C.A."/>
            <person name="Sulston J.E."/>
            <person name="Swann R.M."/>
            <person name="Sycamore N."/>
            <person name="Taylor R."/>
            <person name="Tee L."/>
            <person name="Thomas D.W."/>
            <person name="Thorpe A."/>
            <person name="Tracey A."/>
            <person name="Tromans A.C."/>
            <person name="Vaudin M."/>
            <person name="Wall M."/>
            <person name="Wallis J.M."/>
            <person name="Whitehead S.L."/>
            <person name="Whittaker P."/>
            <person name="Willey D.L."/>
            <person name="Williams L."/>
            <person name="Williams S.A."/>
            <person name="Wilming L."/>
            <person name="Wray P.W."/>
            <person name="Hubbard T."/>
            <person name="Durbin R.M."/>
            <person name="Bentley D.R."/>
            <person name="Beck S."/>
            <person name="Rogers J."/>
        </authorList>
    </citation>
    <scope>NUCLEOTIDE SEQUENCE [LARGE SCALE GENOMIC DNA]</scope>
</reference>
<reference key="6">
    <citation type="journal article" date="2004" name="Genome Res.">
        <title>The status, quality, and expansion of the NIH full-length cDNA project: the Mammalian Gene Collection (MGC).</title>
        <authorList>
            <consortium name="The MGC Project Team"/>
        </authorList>
    </citation>
    <scope>NUCLEOTIDE SEQUENCE [LARGE SCALE MRNA]</scope>
    <scope>VARIANT MET-174</scope>
    <source>
        <tissue>Testis</tissue>
    </source>
</reference>
<reference key="7">
    <citation type="journal article" date="2000" name="Biochemistry">
        <title>Expression and structural characterization of the recombinant human doppel protein.</title>
        <authorList>
            <person name="Lu K."/>
            <person name="Wang W."/>
            <person name="Xie Z."/>
            <person name="Wong B.-S."/>
            <person name="Li R."/>
            <person name="Petersen R.B."/>
            <person name="Sy M.-S."/>
            <person name="Chen S.G."/>
        </authorList>
    </citation>
    <scope>DISULFIDE BONDS</scope>
    <scope>IDENTIFICATION BY MASS SPECTROMETRY</scope>
</reference>
<reference key="8">
    <citation type="journal article" date="2002" name="J. Biol. Chem.">
        <title>The human 'prion-like' protein Doppel is expressed in both Sertoli cells and spermatozoa.</title>
        <authorList>
            <person name="Peoc'h K."/>
            <person name="Serres C."/>
            <person name="Frobert Y."/>
            <person name="Martin C."/>
            <person name="Lehmann S."/>
            <person name="Chasseigneaux S."/>
            <person name="Sazdovitch V."/>
            <person name="Grassi J."/>
            <person name="Jouannet P."/>
            <person name="Launay J.M."/>
            <person name="Laplanche J.L."/>
        </authorList>
    </citation>
    <scope>PROTEIN SEQUENCE OF 26-36</scope>
    <scope>IDENTIFICATION BY MASS SPECTROMETRY</scope>
    <scope>SUBCELLULAR LOCATION</scope>
    <scope>TOPOLOGY</scope>
    <scope>TISSUE SPECIFICITY</scope>
    <scope>GLYCOSYLATION AT THR-43</scope>
</reference>
<reference key="9">
    <citation type="journal article" date="2004" name="J. Biol. Chem.">
        <title>Copper(II) binding to the human Doppel protein may mark its functional diversity from the prion protein.</title>
        <authorList>
            <person name="Cereghetti G.M."/>
            <person name="Negro A."/>
            <person name="Vinck E."/>
            <person name="Massimino M.L."/>
            <person name="Sorgato M.C."/>
            <person name="Van Doorslaer S."/>
        </authorList>
    </citation>
    <scope>SUBCELLULAR LOCATION</scope>
    <scope>FUNCTION</scope>
</reference>
<reference key="10">
    <citation type="journal article" date="2010" name="Chemistry">
        <title>A doppel alpha-helix peptide fragment mimics the copper(II) interactions with the whole protein.</title>
        <authorList>
            <person name="La Mendola D."/>
            <person name="Magri A."/>
            <person name="Campagna T."/>
            <person name="Campitiello M.A."/>
            <person name="Raiola L."/>
            <person name="Isernia C."/>
            <person name="Hansson O."/>
            <person name="Bonomo R.P."/>
            <person name="Rizzarelli E."/>
        </authorList>
    </citation>
    <scope>FUNCTION</scope>
    <scope>DOMAIN</scope>
</reference>
<reference key="11">
    <citation type="journal article" date="2003" name="J. Mol. Biol.">
        <title>NMR structure of the human doppel protein.</title>
        <authorList>
            <person name="Luhrs T."/>
            <person name="Riek R."/>
            <person name="Guntert P."/>
            <person name="Wuethrich K."/>
        </authorList>
    </citation>
    <scope>STRUCTURE BY NMR</scope>
    <scope>DISULFIDE BOND</scope>
</reference>
<reference key="12">
    <citation type="journal article" date="2000" name="Neurosci. Lett.">
        <title>First report of polymorphisms in the prion-like protein gene (PRND): implications for human prion diseases.</title>
        <authorList>
            <person name="Peoc'h K."/>
            <person name="Guerin C."/>
            <person name="Brandel J.-P."/>
            <person name="Launay J.-M."/>
            <person name="Laplanche J.-L."/>
        </authorList>
    </citation>
    <scope>VARIANTS PRO-26; LEU-56 AND MET-174</scope>
</reference>
<reference key="13">
    <citation type="journal article" date="2001" name="Hum. Genet.">
        <title>Polymorphisms within the prion-like protein gene (Prnd) and their implications in human prion diseases, Alzheimer's disease and other neurological disorders.</title>
        <authorList>
            <person name="Schroeder B."/>
            <person name="Franz B."/>
            <person name="Hempfling P."/>
            <person name="Selbert M."/>
            <person name="Juergens T."/>
            <person name="Kretzschmar H.A."/>
            <person name="Bodemer M."/>
            <person name="Poser S."/>
            <person name="Zerr I."/>
        </authorList>
    </citation>
    <scope>VARIANTS ILE-6; PRO-22; ARG-31; LEU-70; SER-149 AND MET-174</scope>
</reference>
<organism>
    <name type="scientific">Homo sapiens</name>
    <name type="common">Human</name>
    <dbReference type="NCBI Taxonomy" id="9606"/>
    <lineage>
        <taxon>Eukaryota</taxon>
        <taxon>Metazoa</taxon>
        <taxon>Chordata</taxon>
        <taxon>Craniata</taxon>
        <taxon>Vertebrata</taxon>
        <taxon>Euteleostomi</taxon>
        <taxon>Mammalia</taxon>
        <taxon>Eutheria</taxon>
        <taxon>Euarchontoglires</taxon>
        <taxon>Primates</taxon>
        <taxon>Haplorrhini</taxon>
        <taxon>Catarrhini</taxon>
        <taxon>Hominidae</taxon>
        <taxon>Homo</taxon>
    </lineage>
</organism>
<dbReference type="EMBL" id="AF106918">
    <property type="protein sequence ID" value="AAF02424.1"/>
    <property type="molecule type" value="Genomic_DNA"/>
</dbReference>
<dbReference type="EMBL" id="AF187843">
    <property type="protein sequence ID" value="AAG43448.1"/>
    <property type="molecule type" value="mRNA"/>
</dbReference>
<dbReference type="EMBL" id="AF187844">
    <property type="protein sequence ID" value="AAG43449.1"/>
    <property type="molecule type" value="mRNA"/>
</dbReference>
<dbReference type="EMBL" id="EU009729">
    <property type="protein sequence ID" value="ABU40603.1"/>
    <property type="molecule type" value="Genomic_DNA"/>
</dbReference>
<dbReference type="EMBL" id="AY358985">
    <property type="protein sequence ID" value="AAQ89344.1"/>
    <property type="molecule type" value="mRNA"/>
</dbReference>
<dbReference type="EMBL" id="AL133396">
    <property type="status" value="NOT_ANNOTATED_CDS"/>
    <property type="molecule type" value="Genomic_DNA"/>
</dbReference>
<dbReference type="EMBL" id="BC043644">
    <property type="protein sequence ID" value="AAH43644.1"/>
    <property type="molecule type" value="mRNA"/>
</dbReference>
<dbReference type="CCDS" id="CCDS13081.1"/>
<dbReference type="RefSeq" id="NP_036541.2">
    <property type="nucleotide sequence ID" value="NM_012409.3"/>
</dbReference>
<dbReference type="PDB" id="1LG4">
    <property type="method" value="NMR"/>
    <property type="chains" value="A=24-152"/>
</dbReference>
<dbReference type="PDBsum" id="1LG4"/>
<dbReference type="BMRB" id="Q9UKY0"/>
<dbReference type="SMR" id="Q9UKY0"/>
<dbReference type="BioGRID" id="117159">
    <property type="interactions" value="7"/>
</dbReference>
<dbReference type="FunCoup" id="Q9UKY0">
    <property type="interactions" value="135"/>
</dbReference>
<dbReference type="IntAct" id="Q9UKY0">
    <property type="interactions" value="7"/>
</dbReference>
<dbReference type="STRING" id="9606.ENSP00000306900"/>
<dbReference type="TCDB" id="1.C.48.1.4">
    <property type="family name" value="the prion peptide (prp) family"/>
</dbReference>
<dbReference type="GlyCosmos" id="Q9UKY0">
    <property type="glycosylation" value="4 sites, 1 glycan"/>
</dbReference>
<dbReference type="GlyGen" id="Q9UKY0">
    <property type="glycosylation" value="4 sites, 1 O-linked glycan (1 site)"/>
</dbReference>
<dbReference type="iPTMnet" id="Q9UKY0"/>
<dbReference type="BioMuta" id="PRND"/>
<dbReference type="DMDM" id="68067934"/>
<dbReference type="MassIVE" id="Q9UKY0"/>
<dbReference type="PaxDb" id="9606-ENSP00000306900"/>
<dbReference type="PeptideAtlas" id="Q9UKY0"/>
<dbReference type="ProteomicsDB" id="84908"/>
<dbReference type="Antibodypedia" id="57305">
    <property type="antibodies" value="71 antibodies from 16 providers"/>
</dbReference>
<dbReference type="DNASU" id="23627"/>
<dbReference type="Ensembl" id="ENST00000305817.3">
    <property type="protein sequence ID" value="ENSP00000306900.2"/>
    <property type="gene ID" value="ENSG00000171864.5"/>
</dbReference>
<dbReference type="GeneID" id="23627"/>
<dbReference type="KEGG" id="hsa:23627"/>
<dbReference type="MANE-Select" id="ENST00000305817.3">
    <property type="protein sequence ID" value="ENSP00000306900.2"/>
    <property type="RefSeq nucleotide sequence ID" value="NM_012409.4"/>
    <property type="RefSeq protein sequence ID" value="NP_036541.2"/>
</dbReference>
<dbReference type="UCSC" id="uc002wkz.5">
    <property type="organism name" value="human"/>
</dbReference>
<dbReference type="AGR" id="HGNC:15748"/>
<dbReference type="CTD" id="23627"/>
<dbReference type="DisGeNET" id="23627"/>
<dbReference type="GeneCards" id="PRND"/>
<dbReference type="HGNC" id="HGNC:15748">
    <property type="gene designation" value="PRND"/>
</dbReference>
<dbReference type="HPA" id="ENSG00000171864">
    <property type="expression patterns" value="Group enriched (choroid plexus, testis)"/>
</dbReference>
<dbReference type="MIM" id="604263">
    <property type="type" value="gene"/>
</dbReference>
<dbReference type="neXtProt" id="NX_Q9UKY0"/>
<dbReference type="OpenTargets" id="ENSG00000171864"/>
<dbReference type="PharmGKB" id="PA33795"/>
<dbReference type="VEuPathDB" id="HostDB:ENSG00000171864"/>
<dbReference type="eggNOG" id="ENOG502RAT9">
    <property type="taxonomic scope" value="Eukaryota"/>
</dbReference>
<dbReference type="GeneTree" id="ENSGT00390000017668"/>
<dbReference type="HOGENOM" id="CLU_1524583_0_0_1"/>
<dbReference type="InParanoid" id="Q9UKY0"/>
<dbReference type="OMA" id="HYDGCSE"/>
<dbReference type="OrthoDB" id="9523143at2759"/>
<dbReference type="PAN-GO" id="Q9UKY0">
    <property type="GO annotations" value="2 GO annotations based on evolutionary models"/>
</dbReference>
<dbReference type="PhylomeDB" id="Q9UKY0"/>
<dbReference type="TreeFam" id="TF337532"/>
<dbReference type="PathwayCommons" id="Q9UKY0"/>
<dbReference type="Reactome" id="R-HSA-163125">
    <property type="pathway name" value="Post-translational modification: synthesis of GPI-anchored proteins"/>
</dbReference>
<dbReference type="SignaLink" id="Q9UKY0"/>
<dbReference type="BioGRID-ORCS" id="23627">
    <property type="hits" value="11 hits in 1134 CRISPR screens"/>
</dbReference>
<dbReference type="EvolutionaryTrace" id="Q9UKY0"/>
<dbReference type="GeneWiki" id="PRND"/>
<dbReference type="GenomeRNAi" id="23627"/>
<dbReference type="Pharos" id="Q9UKY0">
    <property type="development level" value="Tbio"/>
</dbReference>
<dbReference type="PRO" id="PR:Q9UKY0"/>
<dbReference type="Proteomes" id="UP000005640">
    <property type="component" value="Chromosome 20"/>
</dbReference>
<dbReference type="RNAct" id="Q9UKY0">
    <property type="molecule type" value="protein"/>
</dbReference>
<dbReference type="Bgee" id="ENSG00000171864">
    <property type="expression patterns" value="Expressed in right testis and 85 other cell types or tissues"/>
</dbReference>
<dbReference type="GO" id="GO:0009897">
    <property type="term" value="C:external side of plasma membrane"/>
    <property type="evidence" value="ECO:0000314"/>
    <property type="project" value="UniProtKB"/>
</dbReference>
<dbReference type="GO" id="GO:0005576">
    <property type="term" value="C:extracellular region"/>
    <property type="evidence" value="ECO:0000304"/>
    <property type="project" value="Reactome"/>
</dbReference>
<dbReference type="GO" id="GO:0005886">
    <property type="term" value="C:plasma membrane"/>
    <property type="evidence" value="ECO:0000304"/>
    <property type="project" value="Reactome"/>
</dbReference>
<dbReference type="GO" id="GO:0005507">
    <property type="term" value="F:copper ion binding"/>
    <property type="evidence" value="ECO:0000314"/>
    <property type="project" value="UniProtKB"/>
</dbReference>
<dbReference type="GO" id="GO:0007340">
    <property type="term" value="P:acrosome reaction"/>
    <property type="evidence" value="ECO:0000250"/>
    <property type="project" value="UniProtKB"/>
</dbReference>
<dbReference type="GO" id="GO:0006878">
    <property type="term" value="P:intracellular copper ion homeostasis"/>
    <property type="evidence" value="ECO:0000318"/>
    <property type="project" value="GO_Central"/>
</dbReference>
<dbReference type="GO" id="GO:0051260">
    <property type="term" value="P:protein homooligomerization"/>
    <property type="evidence" value="ECO:0007669"/>
    <property type="project" value="InterPro"/>
</dbReference>
<dbReference type="DisProt" id="DP02823"/>
<dbReference type="FunFam" id="1.10.790.10:FF:000002">
    <property type="entry name" value="Prion-like protein doppel"/>
    <property type="match status" value="1"/>
</dbReference>
<dbReference type="Gene3D" id="1.10.790.10">
    <property type="entry name" value="Prion/Doppel protein, beta-ribbon domain"/>
    <property type="match status" value="1"/>
</dbReference>
<dbReference type="InterPro" id="IPR021566">
    <property type="entry name" value="Doppel"/>
</dbReference>
<dbReference type="InterPro" id="IPR036924">
    <property type="entry name" value="Prion/Doppel_b-ribbon_dom_sf"/>
</dbReference>
<dbReference type="InterPro" id="IPR022416">
    <property type="entry name" value="Prion/Doppel_prot_b-ribbon_dom"/>
</dbReference>
<dbReference type="PANTHER" id="PTHR15506">
    <property type="entry name" value="DOPPEL PRION"/>
    <property type="match status" value="1"/>
</dbReference>
<dbReference type="PANTHER" id="PTHR15506:SF0">
    <property type="entry name" value="PRION-LIKE PROTEIN DOPPEL"/>
    <property type="match status" value="1"/>
</dbReference>
<dbReference type="Pfam" id="PF11466">
    <property type="entry name" value="Doppel"/>
    <property type="match status" value="1"/>
</dbReference>
<dbReference type="Pfam" id="PF00377">
    <property type="entry name" value="Prion"/>
    <property type="match status" value="1"/>
</dbReference>
<dbReference type="SUPFAM" id="SSF54098">
    <property type="entry name" value="Prion-like"/>
    <property type="match status" value="1"/>
</dbReference>
<evidence type="ECO:0000250" key="1"/>
<evidence type="ECO:0000250" key="2">
    <source>
        <dbReference type="UniProtKB" id="Q9QUG3"/>
    </source>
</evidence>
<evidence type="ECO:0000255" key="3"/>
<evidence type="ECO:0000269" key="4">
    <source>
    </source>
</evidence>
<evidence type="ECO:0000269" key="5">
    <source>
    </source>
</evidence>
<evidence type="ECO:0000269" key="6">
    <source>
    </source>
</evidence>
<evidence type="ECO:0000269" key="7">
    <source>
    </source>
</evidence>
<evidence type="ECO:0000269" key="8">
    <source>
    </source>
</evidence>
<evidence type="ECO:0000269" key="9">
    <source>
    </source>
</evidence>
<evidence type="ECO:0000269" key="10">
    <source>
    </source>
</evidence>
<evidence type="ECO:0000269" key="11">
    <source>
    </source>
</evidence>
<evidence type="ECO:0000269" key="12">
    <source>
    </source>
</evidence>
<evidence type="ECO:0000269" key="13">
    <source>
    </source>
</evidence>
<evidence type="ECO:0000269" key="14">
    <source ref="2"/>
</evidence>
<evidence type="ECO:0000305" key="15"/>
<evidence type="ECO:0000305" key="16">
    <source>
    </source>
</evidence>
<evidence type="ECO:0007744" key="17">
    <source>
        <dbReference type="PDB" id="1LG4"/>
    </source>
</evidence>
<evidence type="ECO:0007829" key="18">
    <source>
        <dbReference type="PDB" id="1LG4"/>
    </source>
</evidence>
<comment type="function">
    <text evidence="2 11 13">Required for normal acrosome reaction and for normal male fertility (By similarity). Can bind Cu(2+) (PubMed:15218028, PubMed:20411530).</text>
</comment>
<comment type="interaction">
    <interactant intactId="EBI-17783836">
        <id>Q9UKY0</id>
    </interactant>
    <interactant intactId="EBI-16746122">
        <id>Q9NSU2-1</id>
        <label>TREX1</label>
    </interactant>
    <organismsDiffer>false</organismsDiffer>
    <experiments>3</experiments>
</comment>
<comment type="subcellular location">
    <subcellularLocation>
        <location evidence="8 11">Cell membrane</location>
        <topology evidence="8">Lipid-anchor</topology>
        <topology evidence="8">GPI-anchor</topology>
    </subcellularLocation>
</comment>
<comment type="tissue specificity">
    <text evidence="8">Expressed in testis, in Sertoli cells, ejaculated spermatozoa and in seminal fluid (at protein level).</text>
</comment>
<comment type="domain">
    <text evidence="13">A short helical region is required and sufficient for Cu(2+) binding.</text>
</comment>
<comment type="PTM">
    <text evidence="8">N-glycosylated. N-glycosylated at two distinct sites.</text>
</comment>
<comment type="PTM">
    <text evidence="8">O-glycosylated.</text>
</comment>
<comment type="similarity">
    <text evidence="15">Belongs to the prion family.</text>
</comment>
<feature type="signal peptide" evidence="8">
    <location>
        <begin position="1"/>
        <end position="25"/>
    </location>
</feature>
<feature type="chain" id="PRO_0000025745" description="Prion-like protein doppel">
    <location>
        <begin position="26"/>
        <end position="152"/>
    </location>
</feature>
<feature type="propeptide" id="PRO_0000025746" description="Removed in mature form" evidence="1">
    <location>
        <begin position="153"/>
        <end position="176"/>
    </location>
</feature>
<feature type="region of interest" description="Flexible tail">
    <location>
        <begin position="27"/>
        <end position="50"/>
    </location>
</feature>
<feature type="region of interest" description="Globular">
    <location>
        <begin position="51"/>
        <end position="152"/>
    </location>
</feature>
<feature type="region of interest" description="Cu(2+) binding" evidence="13">
    <location>
        <begin position="122"/>
        <end position="139"/>
    </location>
</feature>
<feature type="lipid moiety-binding region" description="GPI-anchor amidated glycine" evidence="3">
    <location>
        <position position="152"/>
    </location>
</feature>
<feature type="glycosylation site" description="O-linked (GalNAc...) threonine" evidence="8">
    <location>
        <position position="43"/>
    </location>
</feature>
<feature type="glycosylation site" description="N-linked (GlcNAc...) asparagine" evidence="16">
    <location>
        <position position="98"/>
    </location>
</feature>
<feature type="glycosylation site" description="N-linked (GlcNAc...) asparagine" evidence="16">
    <location>
        <position position="110"/>
    </location>
</feature>
<feature type="disulfide bond" evidence="6 9 17">
    <location>
        <begin position="94"/>
        <end position="145"/>
    </location>
</feature>
<feature type="disulfide bond" evidence="6 9 17">
    <location>
        <begin position="108"/>
        <end position="140"/>
    </location>
</feature>
<feature type="sequence variant" id="VAR_013769" evidence="7">
    <original>S</original>
    <variation>I</variation>
    <location>
        <position position="6"/>
    </location>
</feature>
<feature type="sequence variant" id="VAR_013770" evidence="7">
    <original>S</original>
    <variation>P</variation>
    <location>
        <position position="22"/>
    </location>
</feature>
<feature type="sequence variant" id="VAR_013765" evidence="5">
    <original>T</original>
    <variation>P</variation>
    <location>
        <position position="26"/>
    </location>
</feature>
<feature type="sequence variant" id="VAR_013771" evidence="7">
    <original>H</original>
    <variation>R</variation>
    <location>
        <position position="31"/>
    </location>
</feature>
<feature type="sequence variant" id="VAR_013766" description="In dbSNP:rs35453518." evidence="5">
    <original>P</original>
    <variation>L</variation>
    <location>
        <position position="56"/>
    </location>
</feature>
<feature type="sequence variant" id="VAR_013772" description="In dbSNP:rs34966363." evidence="7">
    <original>F</original>
    <variation>L</variation>
    <location>
        <position position="70"/>
    </location>
</feature>
<feature type="sequence variant" id="VAR_013773" evidence="7">
    <original>L</original>
    <variation>S</variation>
    <location>
        <position position="149"/>
    </location>
</feature>
<feature type="sequence variant" id="VAR_013767" description="In dbSNP:rs2245220." evidence="4 5 7 10 12 14">
    <original>T</original>
    <variation>M</variation>
    <location>
        <position position="174"/>
    </location>
</feature>
<feature type="sequence conflict" description="In Ref. 2; AAG43448/AAG43449." evidence="15" ref="2">
    <original>K</original>
    <variation>E</variation>
    <location>
        <position position="143"/>
    </location>
</feature>
<feature type="helix" evidence="18">
    <location>
        <begin position="72"/>
        <end position="81"/>
    </location>
</feature>
<feature type="helix" evidence="18">
    <location>
        <begin position="82"/>
        <end position="84"/>
    </location>
</feature>
<feature type="helix" evidence="18">
    <location>
        <begin position="101"/>
        <end position="115"/>
    </location>
</feature>
<feature type="turn" evidence="18">
    <location>
        <begin position="117"/>
        <end position="121"/>
    </location>
</feature>
<feature type="helix" evidence="18">
    <location>
        <begin position="126"/>
        <end position="141"/>
    </location>
</feature>
<feature type="strand" evidence="18">
    <location>
        <begin position="146"/>
        <end position="148"/>
    </location>
</feature>
<accession>Q9UKY0</accession>
<accession>A7U7M5</accession>
<accession>Q9H311</accession>
<accession>Q9H312</accession>
<accession>Q9NTM4</accession>
<proteinExistence type="evidence at protein level"/>
<gene>
    <name type="primary">PRND</name>
    <name type="synonym">DPL</name>
    <name type="ORF">UNQ1830/PRO3443</name>
</gene>
<keyword id="KW-0002">3D-structure</keyword>
<keyword id="KW-0034">Amyloid</keyword>
<keyword id="KW-1003">Cell membrane</keyword>
<keyword id="KW-0186">Copper</keyword>
<keyword id="KW-0903">Direct protein sequencing</keyword>
<keyword id="KW-1015">Disulfide bond</keyword>
<keyword id="KW-0278">Fertilization</keyword>
<keyword id="KW-0325">Glycoprotein</keyword>
<keyword id="KW-0336">GPI-anchor</keyword>
<keyword id="KW-0449">Lipoprotein</keyword>
<keyword id="KW-0472">Membrane</keyword>
<keyword id="KW-0479">Metal-binding</keyword>
<keyword id="KW-0640">Prion</keyword>
<keyword id="KW-1267">Proteomics identification</keyword>
<keyword id="KW-1185">Reference proteome</keyword>
<keyword id="KW-0732">Signal</keyword>
<sequence length="176" mass="20293">MRKHLSWWWLATVCMLLFSHLSAVQTRGIKHRIKWNRKALPSTAQITEAQVAENRPGAFIKQGRKLDIDFGAEGNRYYEANYWQFPDGIHYNGCSEANVTKEAFVTGCINATQAANQGEFQKPDNKLHQQVLWRLVQELCSLKHCEFWLERGAGLRVTMHQPVLLCLLALIWLTVK</sequence>
<protein>
    <recommendedName>
        <fullName>Prion-like protein doppel</fullName>
    </recommendedName>
    <alternativeName>
        <fullName>PrPLP</fullName>
    </alternativeName>
    <alternativeName>
        <fullName>Prion protein 2</fullName>
    </alternativeName>
</protein>